<evidence type="ECO:0000255" key="1">
    <source>
        <dbReference type="HAMAP-Rule" id="MF_00188"/>
    </source>
</evidence>
<evidence type="ECO:0000256" key="2">
    <source>
        <dbReference type="SAM" id="MobiDB-lite"/>
    </source>
</evidence>
<organism>
    <name type="scientific">Brucella melitensis biotype 2 (strain ATCC 23457)</name>
    <dbReference type="NCBI Taxonomy" id="546272"/>
    <lineage>
        <taxon>Bacteria</taxon>
        <taxon>Pseudomonadati</taxon>
        <taxon>Pseudomonadota</taxon>
        <taxon>Alphaproteobacteria</taxon>
        <taxon>Hyphomicrobiales</taxon>
        <taxon>Brucellaceae</taxon>
        <taxon>Brucella/Ochrobactrum group</taxon>
        <taxon>Brucella</taxon>
    </lineage>
</organism>
<dbReference type="EC" id="3.4.24.-" evidence="1"/>
<dbReference type="EMBL" id="CP001488">
    <property type="protein sequence ID" value="ACO01536.1"/>
    <property type="molecule type" value="Genomic_DNA"/>
</dbReference>
<dbReference type="RefSeq" id="WP_004684282.1">
    <property type="nucleotide sequence ID" value="NC_012441.1"/>
</dbReference>
<dbReference type="SMR" id="C0RF64"/>
<dbReference type="GeneID" id="29592997"/>
<dbReference type="KEGG" id="bmi:BMEA_A1863"/>
<dbReference type="HOGENOM" id="CLU_042266_3_0_5"/>
<dbReference type="Proteomes" id="UP000001748">
    <property type="component" value="Chromosome I"/>
</dbReference>
<dbReference type="GO" id="GO:0005886">
    <property type="term" value="C:plasma membrane"/>
    <property type="evidence" value="ECO:0007669"/>
    <property type="project" value="UniProtKB-SubCell"/>
</dbReference>
<dbReference type="GO" id="GO:0004222">
    <property type="term" value="F:metalloendopeptidase activity"/>
    <property type="evidence" value="ECO:0007669"/>
    <property type="project" value="UniProtKB-UniRule"/>
</dbReference>
<dbReference type="GO" id="GO:0008270">
    <property type="term" value="F:zinc ion binding"/>
    <property type="evidence" value="ECO:0007669"/>
    <property type="project" value="UniProtKB-UniRule"/>
</dbReference>
<dbReference type="GO" id="GO:0006508">
    <property type="term" value="P:proteolysis"/>
    <property type="evidence" value="ECO:0007669"/>
    <property type="project" value="UniProtKB-KW"/>
</dbReference>
<dbReference type="CDD" id="cd07336">
    <property type="entry name" value="M48B_HtpX_like"/>
    <property type="match status" value="1"/>
</dbReference>
<dbReference type="Gene3D" id="3.30.2010.10">
    <property type="entry name" value="Metalloproteases ('zincins'), catalytic domain"/>
    <property type="match status" value="1"/>
</dbReference>
<dbReference type="HAMAP" id="MF_00188">
    <property type="entry name" value="Pept_M48_protease_HtpX"/>
    <property type="match status" value="1"/>
</dbReference>
<dbReference type="InterPro" id="IPR050083">
    <property type="entry name" value="HtpX_protease"/>
</dbReference>
<dbReference type="InterPro" id="IPR022919">
    <property type="entry name" value="Pept_M48_protease_HtpX"/>
</dbReference>
<dbReference type="InterPro" id="IPR001915">
    <property type="entry name" value="Peptidase_M48"/>
</dbReference>
<dbReference type="NCBIfam" id="NF002363">
    <property type="entry name" value="PRK01345.1"/>
    <property type="match status" value="1"/>
</dbReference>
<dbReference type="NCBIfam" id="NF002826">
    <property type="entry name" value="PRK03001.1"/>
    <property type="match status" value="1"/>
</dbReference>
<dbReference type="PANTHER" id="PTHR43221">
    <property type="entry name" value="PROTEASE HTPX"/>
    <property type="match status" value="1"/>
</dbReference>
<dbReference type="PANTHER" id="PTHR43221:SF1">
    <property type="entry name" value="PROTEASE HTPX"/>
    <property type="match status" value="1"/>
</dbReference>
<dbReference type="Pfam" id="PF01435">
    <property type="entry name" value="Peptidase_M48"/>
    <property type="match status" value="1"/>
</dbReference>
<dbReference type="PROSITE" id="PS00142">
    <property type="entry name" value="ZINC_PROTEASE"/>
    <property type="match status" value="1"/>
</dbReference>
<sequence length="325" mass="34472">MNMTKTAMLIALMTVMFMSIGYLLGGGGGMMIALVIAVAMNLFGYWNSDKMVLRMYNAQEVDERSAPEYYRMVSGLAANAGLPMPKVYIIHEDQPNAFATGRNPENAAVAATTGLLNWLSPEEVAGVMAHELAHVQNRDTLTMTIVATLAGAISMLGNFAFFLGGNRENGNGVMGVVGTLLAMIVAPFGAMIVQMAVSRTREYAADKRGAEICGNPLWLSSALGKIARGAKVIPNEEAEHNPATAHMFIINPLSGRGADNLFSTHPDTDNRIAALEQMAAETGIRSAAMTARAAAPSQNSGPWGQRSDNAGGNSNGGSRYRGPWS</sequence>
<accession>C0RF64</accession>
<comment type="cofactor">
    <cofactor evidence="1">
        <name>Zn(2+)</name>
        <dbReference type="ChEBI" id="CHEBI:29105"/>
    </cofactor>
    <text evidence="1">Binds 1 zinc ion per subunit.</text>
</comment>
<comment type="subcellular location">
    <subcellularLocation>
        <location evidence="1">Cell inner membrane</location>
        <topology evidence="1">Multi-pass membrane protein</topology>
    </subcellularLocation>
</comment>
<comment type="similarity">
    <text evidence="1">Belongs to the peptidase M48B family.</text>
</comment>
<proteinExistence type="inferred from homology"/>
<protein>
    <recommendedName>
        <fullName evidence="1">Protease HtpX homolog</fullName>
        <ecNumber evidence="1">3.4.24.-</ecNumber>
    </recommendedName>
</protein>
<name>HTPX_BRUMB</name>
<gene>
    <name evidence="1" type="primary">htpX</name>
    <name type="ordered locus">BMEA_A1863</name>
</gene>
<feature type="chain" id="PRO_1000124221" description="Protease HtpX homolog">
    <location>
        <begin position="1"/>
        <end position="325"/>
    </location>
</feature>
<feature type="transmembrane region" description="Helical" evidence="1">
    <location>
        <begin position="20"/>
        <end position="40"/>
    </location>
</feature>
<feature type="transmembrane region" description="Helical" evidence="1">
    <location>
        <begin position="145"/>
        <end position="165"/>
    </location>
</feature>
<feature type="transmembrane region" description="Helical" evidence="1">
    <location>
        <begin position="173"/>
        <end position="193"/>
    </location>
</feature>
<feature type="region of interest" description="Disordered" evidence="2">
    <location>
        <begin position="286"/>
        <end position="325"/>
    </location>
</feature>
<feature type="compositionally biased region" description="Low complexity" evidence="2">
    <location>
        <begin position="306"/>
        <end position="325"/>
    </location>
</feature>
<feature type="active site" evidence="1">
    <location>
        <position position="131"/>
    </location>
</feature>
<feature type="binding site" evidence="1">
    <location>
        <position position="130"/>
    </location>
    <ligand>
        <name>Zn(2+)</name>
        <dbReference type="ChEBI" id="CHEBI:29105"/>
        <note>catalytic</note>
    </ligand>
</feature>
<feature type="binding site" evidence="1">
    <location>
        <position position="134"/>
    </location>
    <ligand>
        <name>Zn(2+)</name>
        <dbReference type="ChEBI" id="CHEBI:29105"/>
        <note>catalytic</note>
    </ligand>
</feature>
<feature type="binding site" evidence="1">
    <location>
        <position position="202"/>
    </location>
    <ligand>
        <name>Zn(2+)</name>
        <dbReference type="ChEBI" id="CHEBI:29105"/>
        <note>catalytic</note>
    </ligand>
</feature>
<keyword id="KW-0997">Cell inner membrane</keyword>
<keyword id="KW-1003">Cell membrane</keyword>
<keyword id="KW-0378">Hydrolase</keyword>
<keyword id="KW-0472">Membrane</keyword>
<keyword id="KW-0479">Metal-binding</keyword>
<keyword id="KW-0482">Metalloprotease</keyword>
<keyword id="KW-0645">Protease</keyword>
<keyword id="KW-0812">Transmembrane</keyword>
<keyword id="KW-1133">Transmembrane helix</keyword>
<keyword id="KW-0862">Zinc</keyword>
<reference key="1">
    <citation type="submission" date="2009-03" db="EMBL/GenBank/DDBJ databases">
        <title>Brucella melitensis ATCC 23457 whole genome shotgun sequencing project.</title>
        <authorList>
            <person name="Setubal J.C."/>
            <person name="Boyle S."/>
            <person name="Crasta O.R."/>
            <person name="Gillespie J.J."/>
            <person name="Kenyon R.W."/>
            <person name="Lu J."/>
            <person name="Mane S."/>
            <person name="Nagrani S."/>
            <person name="Shallom J.M."/>
            <person name="Shallom S."/>
            <person name="Shukla M."/>
            <person name="Snyder E.E."/>
            <person name="Sobral B.W."/>
            <person name="Wattam A.R."/>
            <person name="Will R."/>
            <person name="Williams K."/>
            <person name="Yoo H."/>
            <person name="Munk C."/>
            <person name="Tapia R."/>
            <person name="Han C."/>
            <person name="Detter J.C."/>
            <person name="Bruce D."/>
            <person name="Brettin T.S."/>
        </authorList>
    </citation>
    <scope>NUCLEOTIDE SEQUENCE [LARGE SCALE GENOMIC DNA]</scope>
    <source>
        <strain>ATCC 23457</strain>
    </source>
</reference>